<comment type="function">
    <text evidence="1">Required for insertion of 4Fe-4S clusters for at least IspG.</text>
</comment>
<comment type="cofactor">
    <cofactor evidence="1">
        <name>iron-sulfur cluster</name>
        <dbReference type="ChEBI" id="CHEBI:30408"/>
    </cofactor>
    <text evidence="1">Binds 1 iron-sulfur cluster per subunit.</text>
</comment>
<comment type="subunit">
    <text evidence="1">Homodimer.</text>
</comment>
<comment type="similarity">
    <text evidence="1">Belongs to the HesB/IscA family.</text>
</comment>
<organism>
    <name type="scientific">Vibrio parahaemolyticus serotype O3:K6 (strain RIMD 2210633)</name>
    <dbReference type="NCBI Taxonomy" id="223926"/>
    <lineage>
        <taxon>Bacteria</taxon>
        <taxon>Pseudomonadati</taxon>
        <taxon>Pseudomonadota</taxon>
        <taxon>Gammaproteobacteria</taxon>
        <taxon>Vibrionales</taxon>
        <taxon>Vibrionaceae</taxon>
        <taxon>Vibrio</taxon>
    </lineage>
</organism>
<evidence type="ECO:0000255" key="1">
    <source>
        <dbReference type="HAMAP-Rule" id="MF_01380"/>
    </source>
</evidence>
<protein>
    <recommendedName>
        <fullName evidence="1">Iron-sulfur cluster insertion protein ErpA</fullName>
    </recommendedName>
</protein>
<name>ERPA_VIBPA</name>
<dbReference type="EMBL" id="BA000031">
    <property type="protein sequence ID" value="BAC60737.1"/>
    <property type="molecule type" value="Genomic_DNA"/>
</dbReference>
<dbReference type="RefSeq" id="NP_798853.1">
    <property type="nucleotide sequence ID" value="NC_004603.1"/>
</dbReference>
<dbReference type="RefSeq" id="WP_005461279.1">
    <property type="nucleotide sequence ID" value="NC_004603.1"/>
</dbReference>
<dbReference type="SMR" id="Q87LY4"/>
<dbReference type="GeneID" id="1189989"/>
<dbReference type="KEGG" id="vpa:VP2474"/>
<dbReference type="PATRIC" id="fig|223926.6.peg.2374"/>
<dbReference type="eggNOG" id="COG0316">
    <property type="taxonomic scope" value="Bacteria"/>
</dbReference>
<dbReference type="HOGENOM" id="CLU_069054_5_3_6"/>
<dbReference type="Proteomes" id="UP000002493">
    <property type="component" value="Chromosome 1"/>
</dbReference>
<dbReference type="GO" id="GO:0005829">
    <property type="term" value="C:cytosol"/>
    <property type="evidence" value="ECO:0007669"/>
    <property type="project" value="TreeGrafter"/>
</dbReference>
<dbReference type="GO" id="GO:0051537">
    <property type="term" value="F:2 iron, 2 sulfur cluster binding"/>
    <property type="evidence" value="ECO:0007669"/>
    <property type="project" value="TreeGrafter"/>
</dbReference>
<dbReference type="GO" id="GO:0051539">
    <property type="term" value="F:4 iron, 4 sulfur cluster binding"/>
    <property type="evidence" value="ECO:0007669"/>
    <property type="project" value="TreeGrafter"/>
</dbReference>
<dbReference type="GO" id="GO:0005506">
    <property type="term" value="F:iron ion binding"/>
    <property type="evidence" value="ECO:0007669"/>
    <property type="project" value="UniProtKB-UniRule"/>
</dbReference>
<dbReference type="GO" id="GO:0016226">
    <property type="term" value="P:iron-sulfur cluster assembly"/>
    <property type="evidence" value="ECO:0007669"/>
    <property type="project" value="UniProtKB-UniRule"/>
</dbReference>
<dbReference type="FunFam" id="2.60.300.12:FF:000002">
    <property type="entry name" value="Iron-sulfur cluster insertion protein ErpA"/>
    <property type="match status" value="1"/>
</dbReference>
<dbReference type="Gene3D" id="2.60.300.12">
    <property type="entry name" value="HesB-like domain"/>
    <property type="match status" value="1"/>
</dbReference>
<dbReference type="HAMAP" id="MF_01380">
    <property type="entry name" value="Fe_S_insert_ErpA"/>
    <property type="match status" value="1"/>
</dbReference>
<dbReference type="InterPro" id="IPR000361">
    <property type="entry name" value="FeS_biogenesis"/>
</dbReference>
<dbReference type="InterPro" id="IPR016092">
    <property type="entry name" value="FeS_cluster_insertion"/>
</dbReference>
<dbReference type="InterPro" id="IPR017870">
    <property type="entry name" value="FeS_cluster_insertion_CS"/>
</dbReference>
<dbReference type="InterPro" id="IPR023063">
    <property type="entry name" value="FeS_cluster_insertion_RrpA"/>
</dbReference>
<dbReference type="InterPro" id="IPR035903">
    <property type="entry name" value="HesB-like_dom_sf"/>
</dbReference>
<dbReference type="NCBIfam" id="TIGR00049">
    <property type="entry name" value="iron-sulfur cluster assembly accessory protein"/>
    <property type="match status" value="1"/>
</dbReference>
<dbReference type="NCBIfam" id="NF010147">
    <property type="entry name" value="PRK13623.1"/>
    <property type="match status" value="1"/>
</dbReference>
<dbReference type="PANTHER" id="PTHR43011">
    <property type="entry name" value="IRON-SULFUR CLUSTER ASSEMBLY 2 HOMOLOG, MITOCHONDRIAL"/>
    <property type="match status" value="1"/>
</dbReference>
<dbReference type="PANTHER" id="PTHR43011:SF1">
    <property type="entry name" value="IRON-SULFUR CLUSTER ASSEMBLY 2 HOMOLOG, MITOCHONDRIAL"/>
    <property type="match status" value="1"/>
</dbReference>
<dbReference type="Pfam" id="PF01521">
    <property type="entry name" value="Fe-S_biosyn"/>
    <property type="match status" value="1"/>
</dbReference>
<dbReference type="SUPFAM" id="SSF89360">
    <property type="entry name" value="HesB-like domain"/>
    <property type="match status" value="1"/>
</dbReference>
<dbReference type="PROSITE" id="PS01152">
    <property type="entry name" value="HESB"/>
    <property type="match status" value="1"/>
</dbReference>
<accession>Q87LY4</accession>
<sequence>MSEVNVPLSFSDAAASRVKALIAEEENPALKLRVYITGGGCSGFQYGFTFDENVNDGDTTIENSGVTLVVDPMSLQYLIGGIVDYTEGLEGARFFVNNPNATTTCGCGASFSV</sequence>
<gene>
    <name evidence="1" type="primary">erpA</name>
    <name type="ordered locus">VP2474</name>
</gene>
<reference key="1">
    <citation type="journal article" date="2003" name="Lancet">
        <title>Genome sequence of Vibrio parahaemolyticus: a pathogenic mechanism distinct from that of V. cholerae.</title>
        <authorList>
            <person name="Makino K."/>
            <person name="Oshima K."/>
            <person name="Kurokawa K."/>
            <person name="Yokoyama K."/>
            <person name="Uda T."/>
            <person name="Tagomori K."/>
            <person name="Iijima Y."/>
            <person name="Najima M."/>
            <person name="Nakano M."/>
            <person name="Yamashita A."/>
            <person name="Kubota Y."/>
            <person name="Kimura S."/>
            <person name="Yasunaga T."/>
            <person name="Honda T."/>
            <person name="Shinagawa H."/>
            <person name="Hattori M."/>
            <person name="Iida T."/>
        </authorList>
    </citation>
    <scope>NUCLEOTIDE SEQUENCE [LARGE SCALE GENOMIC DNA]</scope>
    <source>
        <strain>RIMD 2210633</strain>
    </source>
</reference>
<keyword id="KW-0408">Iron</keyword>
<keyword id="KW-0411">Iron-sulfur</keyword>
<keyword id="KW-0479">Metal-binding</keyword>
<proteinExistence type="inferred from homology"/>
<feature type="chain" id="PRO_0000311571" description="Iron-sulfur cluster insertion protein ErpA">
    <location>
        <begin position="1"/>
        <end position="113"/>
    </location>
</feature>
<feature type="binding site" evidence="1">
    <location>
        <position position="41"/>
    </location>
    <ligand>
        <name>iron-sulfur cluster</name>
        <dbReference type="ChEBI" id="CHEBI:30408"/>
    </ligand>
</feature>
<feature type="binding site" evidence="1">
    <location>
        <position position="105"/>
    </location>
    <ligand>
        <name>iron-sulfur cluster</name>
        <dbReference type="ChEBI" id="CHEBI:30408"/>
    </ligand>
</feature>
<feature type="binding site" evidence="1">
    <location>
        <position position="107"/>
    </location>
    <ligand>
        <name>iron-sulfur cluster</name>
        <dbReference type="ChEBI" id="CHEBI:30408"/>
    </ligand>
</feature>